<keyword id="KW-0285">Flavoprotein</keyword>
<keyword id="KW-0288">FMN</keyword>
<keyword id="KW-0520">NAD</keyword>
<keyword id="KW-0560">Oxidoreductase</keyword>
<keyword id="KW-1185">Reference proteome</keyword>
<feature type="chain" id="PRO_0000166331" description="FMN-dependent NADH:quinone oxidoreductase 1">
    <location>
        <begin position="1"/>
        <end position="221"/>
    </location>
</feature>
<feature type="binding site" evidence="1">
    <location>
        <begin position="17"/>
        <end position="19"/>
    </location>
    <ligand>
        <name>FMN</name>
        <dbReference type="ChEBI" id="CHEBI:58210"/>
    </ligand>
</feature>
<feature type="binding site" evidence="1">
    <location>
        <begin position="148"/>
        <end position="151"/>
    </location>
    <ligand>
        <name>FMN</name>
        <dbReference type="ChEBI" id="CHEBI:58210"/>
    </ligand>
</feature>
<reference key="1">
    <citation type="journal article" date="2001" name="J. Bacteriol.">
        <title>Genome sequence and comparative analysis of the solvent-producing bacterium Clostridium acetobutylicum.</title>
        <authorList>
            <person name="Noelling J."/>
            <person name="Breton G."/>
            <person name="Omelchenko M.V."/>
            <person name="Makarova K.S."/>
            <person name="Zeng Q."/>
            <person name="Gibson R."/>
            <person name="Lee H.M."/>
            <person name="Dubois J."/>
            <person name="Qiu D."/>
            <person name="Hitti J."/>
            <person name="Wolf Y.I."/>
            <person name="Tatusov R.L."/>
            <person name="Sabathe F."/>
            <person name="Doucette-Stamm L.A."/>
            <person name="Soucaille P."/>
            <person name="Daly M.J."/>
            <person name="Bennett G.N."/>
            <person name="Koonin E.V."/>
            <person name="Smith D.R."/>
        </authorList>
    </citation>
    <scope>NUCLEOTIDE SEQUENCE [LARGE SCALE GENOMIC DNA]</scope>
    <source>
        <strain>ATCC 824 / DSM 792 / JCM 1419 / IAM 19013 / LMG 5710 / NBRC 13948 / NRRL B-527 / VKM B-1787 / 2291 / W</strain>
    </source>
</reference>
<dbReference type="EC" id="1.6.5.-" evidence="1"/>
<dbReference type="EC" id="1.7.1.17" evidence="1"/>
<dbReference type="EMBL" id="AE001437">
    <property type="protein sequence ID" value="AAK78582.1"/>
    <property type="molecule type" value="Genomic_DNA"/>
</dbReference>
<dbReference type="PIR" id="C96974">
    <property type="entry name" value="C96974"/>
</dbReference>
<dbReference type="RefSeq" id="NP_347242.1">
    <property type="nucleotide sequence ID" value="NC_003030.1"/>
</dbReference>
<dbReference type="RefSeq" id="WP_010963924.1">
    <property type="nucleotide sequence ID" value="NC_003030.1"/>
</dbReference>
<dbReference type="SMR" id="Q97LF7"/>
<dbReference type="STRING" id="272562.CA_C0604"/>
<dbReference type="KEGG" id="cac:CA_C0604"/>
<dbReference type="PATRIC" id="fig|272562.8.peg.807"/>
<dbReference type="eggNOG" id="COG1182">
    <property type="taxonomic scope" value="Bacteria"/>
</dbReference>
<dbReference type="HOGENOM" id="CLU_088964_3_1_9"/>
<dbReference type="OrthoDB" id="9805013at2"/>
<dbReference type="Proteomes" id="UP000000814">
    <property type="component" value="Chromosome"/>
</dbReference>
<dbReference type="GO" id="GO:0009055">
    <property type="term" value="F:electron transfer activity"/>
    <property type="evidence" value="ECO:0007669"/>
    <property type="project" value="UniProtKB-UniRule"/>
</dbReference>
<dbReference type="GO" id="GO:0010181">
    <property type="term" value="F:FMN binding"/>
    <property type="evidence" value="ECO:0007669"/>
    <property type="project" value="UniProtKB-UniRule"/>
</dbReference>
<dbReference type="GO" id="GO:0016652">
    <property type="term" value="F:oxidoreductase activity, acting on NAD(P)H as acceptor"/>
    <property type="evidence" value="ECO:0007669"/>
    <property type="project" value="UniProtKB-UniRule"/>
</dbReference>
<dbReference type="GO" id="GO:0016655">
    <property type="term" value="F:oxidoreductase activity, acting on NAD(P)H, quinone or similar compound as acceptor"/>
    <property type="evidence" value="ECO:0007669"/>
    <property type="project" value="InterPro"/>
</dbReference>
<dbReference type="Gene3D" id="3.40.50.360">
    <property type="match status" value="1"/>
</dbReference>
<dbReference type="HAMAP" id="MF_01216">
    <property type="entry name" value="Azoreductase_type1"/>
    <property type="match status" value="1"/>
</dbReference>
<dbReference type="InterPro" id="IPR003680">
    <property type="entry name" value="Flavodoxin_fold"/>
</dbReference>
<dbReference type="InterPro" id="IPR029039">
    <property type="entry name" value="Flavoprotein-like_sf"/>
</dbReference>
<dbReference type="InterPro" id="IPR050104">
    <property type="entry name" value="FMN-dep_NADH:Q_OxRdtase_AzoR1"/>
</dbReference>
<dbReference type="InterPro" id="IPR023048">
    <property type="entry name" value="NADH:quinone_OxRdtase_FMN_depd"/>
</dbReference>
<dbReference type="PANTHER" id="PTHR43741">
    <property type="entry name" value="FMN-DEPENDENT NADH-AZOREDUCTASE 1"/>
    <property type="match status" value="1"/>
</dbReference>
<dbReference type="PANTHER" id="PTHR43741:SF4">
    <property type="entry name" value="FMN-DEPENDENT NADH:QUINONE OXIDOREDUCTASE"/>
    <property type="match status" value="1"/>
</dbReference>
<dbReference type="Pfam" id="PF02525">
    <property type="entry name" value="Flavodoxin_2"/>
    <property type="match status" value="1"/>
</dbReference>
<dbReference type="SUPFAM" id="SSF52218">
    <property type="entry name" value="Flavoproteins"/>
    <property type="match status" value="1"/>
</dbReference>
<gene>
    <name evidence="1" type="primary">azoR1</name>
    <name type="ordered locus">CA_C0604</name>
</gene>
<sequence>MKKLLYISVNTKPEGMSASKTVGREFVDRFVQNYPEYQLIEHDICNEYIPELDHRFLNDNGDIVSGNDYNLLSDNDKKIVDRINDLCNEFVSADVYVIAYPMWSSLFPPRLKMYIDCIVQNGKTIKISEDESSGLLSDKERSVLCIQSSGGVYPKIISWKINHGINYLHDIFRHLGIKKFEKLLVEGVDVQDIGKEKAVEKAFDEIDELIDKMQVRDFVKQ</sequence>
<proteinExistence type="inferred from homology"/>
<comment type="function">
    <text evidence="1">Quinone reductase that provides resistance to thiol-specific stress caused by electrophilic quinones.</text>
</comment>
<comment type="function">
    <text evidence="1">Also exhibits azoreductase activity. Catalyzes the reductive cleavage of the azo bond in aromatic azo compounds to the corresponding amines.</text>
</comment>
<comment type="catalytic activity">
    <reaction evidence="1">
        <text>2 a quinone + NADH + H(+) = 2 a 1,4-benzosemiquinone + NAD(+)</text>
        <dbReference type="Rhea" id="RHEA:65952"/>
        <dbReference type="ChEBI" id="CHEBI:15378"/>
        <dbReference type="ChEBI" id="CHEBI:57540"/>
        <dbReference type="ChEBI" id="CHEBI:57945"/>
        <dbReference type="ChEBI" id="CHEBI:132124"/>
        <dbReference type="ChEBI" id="CHEBI:134225"/>
    </reaction>
</comment>
<comment type="catalytic activity">
    <reaction evidence="1">
        <text>N,N-dimethyl-1,4-phenylenediamine + anthranilate + 2 NAD(+) = 2-(4-dimethylaminophenyl)diazenylbenzoate + 2 NADH + 2 H(+)</text>
        <dbReference type="Rhea" id="RHEA:55872"/>
        <dbReference type="ChEBI" id="CHEBI:15378"/>
        <dbReference type="ChEBI" id="CHEBI:15783"/>
        <dbReference type="ChEBI" id="CHEBI:16567"/>
        <dbReference type="ChEBI" id="CHEBI:57540"/>
        <dbReference type="ChEBI" id="CHEBI:57945"/>
        <dbReference type="ChEBI" id="CHEBI:71579"/>
        <dbReference type="EC" id="1.7.1.17"/>
    </reaction>
</comment>
<comment type="cofactor">
    <cofactor evidence="1">
        <name>FMN</name>
        <dbReference type="ChEBI" id="CHEBI:58210"/>
    </cofactor>
    <text evidence="1">Binds 1 FMN per subunit.</text>
</comment>
<comment type="subunit">
    <text evidence="1">Homodimer.</text>
</comment>
<comment type="similarity">
    <text evidence="1">Belongs to the azoreductase type 1 family.</text>
</comment>
<accession>Q97LF7</accession>
<name>AZOR1_CLOAB</name>
<evidence type="ECO:0000255" key="1">
    <source>
        <dbReference type="HAMAP-Rule" id="MF_01216"/>
    </source>
</evidence>
<organism>
    <name type="scientific">Clostridium acetobutylicum (strain ATCC 824 / DSM 792 / JCM 1419 / IAM 19013 / LMG 5710 / NBRC 13948 / NRRL B-527 / VKM B-1787 / 2291 / W)</name>
    <dbReference type="NCBI Taxonomy" id="272562"/>
    <lineage>
        <taxon>Bacteria</taxon>
        <taxon>Bacillati</taxon>
        <taxon>Bacillota</taxon>
        <taxon>Clostridia</taxon>
        <taxon>Eubacteriales</taxon>
        <taxon>Clostridiaceae</taxon>
        <taxon>Clostridium</taxon>
    </lineage>
</organism>
<protein>
    <recommendedName>
        <fullName evidence="1">FMN-dependent NADH:quinone oxidoreductase 1</fullName>
        <ecNumber evidence="1">1.6.5.-</ecNumber>
    </recommendedName>
    <alternativeName>
        <fullName evidence="1">Azo-dye reductase 1</fullName>
    </alternativeName>
    <alternativeName>
        <fullName evidence="1">FMN-dependent NADH-azo compound oxidoreductase 1</fullName>
    </alternativeName>
    <alternativeName>
        <fullName evidence="1">FMN-dependent NADH-azoreductase 1</fullName>
        <ecNumber evidence="1">1.7.1.17</ecNumber>
    </alternativeName>
</protein>